<name>RF1_CLOTE</name>
<keyword id="KW-0963">Cytoplasm</keyword>
<keyword id="KW-0488">Methylation</keyword>
<keyword id="KW-0648">Protein biosynthesis</keyword>
<keyword id="KW-1185">Reference proteome</keyword>
<comment type="function">
    <text evidence="1">Peptide chain release factor 1 directs the termination of translation in response to the peptide chain termination codons UAG and UAA.</text>
</comment>
<comment type="subcellular location">
    <subcellularLocation>
        <location evidence="1">Cytoplasm</location>
    </subcellularLocation>
</comment>
<comment type="PTM">
    <text evidence="1">Methylated by PrmC. Methylation increases the termination efficiency of RF1.</text>
</comment>
<comment type="similarity">
    <text evidence="1">Belongs to the prokaryotic/mitochondrial release factor family.</text>
</comment>
<reference key="1">
    <citation type="journal article" date="2003" name="Proc. Natl. Acad. Sci. U.S.A.">
        <title>The genome sequence of Clostridium tetani, the causative agent of tetanus disease.</title>
        <authorList>
            <person name="Brueggemann H."/>
            <person name="Baeumer S."/>
            <person name="Fricke W.F."/>
            <person name="Wiezer A."/>
            <person name="Liesegang H."/>
            <person name="Decker I."/>
            <person name="Herzberg C."/>
            <person name="Martinez-Arias R."/>
            <person name="Merkl R."/>
            <person name="Henne A."/>
            <person name="Gottschalk G."/>
        </authorList>
    </citation>
    <scope>NUCLEOTIDE SEQUENCE [LARGE SCALE GENOMIC DNA]</scope>
    <source>
        <strain>Massachusetts / E88</strain>
    </source>
</reference>
<organism>
    <name type="scientific">Clostridium tetani (strain Massachusetts / E88)</name>
    <dbReference type="NCBI Taxonomy" id="212717"/>
    <lineage>
        <taxon>Bacteria</taxon>
        <taxon>Bacillati</taxon>
        <taxon>Bacillota</taxon>
        <taxon>Clostridia</taxon>
        <taxon>Eubacteriales</taxon>
        <taxon>Clostridiaceae</taxon>
        <taxon>Clostridium</taxon>
    </lineage>
</organism>
<feature type="chain" id="PRO_0000177662" description="Peptide chain release factor 1">
    <location>
        <begin position="1"/>
        <end position="355"/>
    </location>
</feature>
<feature type="modified residue" description="N5-methylglutamine" evidence="1">
    <location>
        <position position="233"/>
    </location>
</feature>
<evidence type="ECO:0000255" key="1">
    <source>
        <dbReference type="HAMAP-Rule" id="MF_00093"/>
    </source>
</evidence>
<protein>
    <recommendedName>
        <fullName evidence="1">Peptide chain release factor 1</fullName>
        <shortName evidence="1">RF-1</shortName>
    </recommendedName>
</protein>
<sequence length="355" mass="40841">MLDRLNFIENKYEELSIKISDPTVMQDQKEWQKLCKEHSDMETIVTTYKEYKEVLQSIEDNKEMLKEDIEQELRDMVQEDIKELEQRVQELEQELKMLLVPKDPNDEKNVFIEIRAGAGGDEAALFAANLFRMYTRYAERHNWKTEAVSVNETDIGGFKEIVFMVRGKGAYSRLKYESGVHRVQRVPDTESSGRIHTSTATVAVLPEVEDVDVEINQNDLRVDVYRASGHGGQCVNTTDSAVRITHLPSGLVVTCQDEKSQLKNKEKAMKVLKSRLYDMLESERSASIAEDRKSQVGTGDRSERIRTYNYPQGRVTDHRIGLTLYKLESFLDGDIEEMIDGLITVEQSERMKDIS</sequence>
<dbReference type="EMBL" id="AE015927">
    <property type="protein sequence ID" value="AAO34944.1"/>
    <property type="molecule type" value="Genomic_DNA"/>
</dbReference>
<dbReference type="RefSeq" id="WP_011098615.1">
    <property type="nucleotide sequence ID" value="NC_004557.1"/>
</dbReference>
<dbReference type="SMR" id="Q898Y5"/>
<dbReference type="STRING" id="212717.CTC_00302"/>
<dbReference type="GeneID" id="24252483"/>
<dbReference type="KEGG" id="ctc:CTC_00302"/>
<dbReference type="HOGENOM" id="CLU_036856_0_1_9"/>
<dbReference type="OrthoDB" id="9806673at2"/>
<dbReference type="Proteomes" id="UP000001412">
    <property type="component" value="Chromosome"/>
</dbReference>
<dbReference type="GO" id="GO:0005737">
    <property type="term" value="C:cytoplasm"/>
    <property type="evidence" value="ECO:0007669"/>
    <property type="project" value="UniProtKB-SubCell"/>
</dbReference>
<dbReference type="GO" id="GO:0016149">
    <property type="term" value="F:translation release factor activity, codon specific"/>
    <property type="evidence" value="ECO:0007669"/>
    <property type="project" value="UniProtKB-UniRule"/>
</dbReference>
<dbReference type="FunFam" id="3.30.160.20:FF:000004">
    <property type="entry name" value="Peptide chain release factor 1"/>
    <property type="match status" value="1"/>
</dbReference>
<dbReference type="FunFam" id="3.30.70.1660:FF:000002">
    <property type="entry name" value="Peptide chain release factor 1"/>
    <property type="match status" value="1"/>
</dbReference>
<dbReference type="FunFam" id="3.30.70.1660:FF:000004">
    <property type="entry name" value="Peptide chain release factor 1"/>
    <property type="match status" value="1"/>
</dbReference>
<dbReference type="Gene3D" id="3.30.160.20">
    <property type="match status" value="1"/>
</dbReference>
<dbReference type="Gene3D" id="3.30.70.1660">
    <property type="match status" value="1"/>
</dbReference>
<dbReference type="Gene3D" id="6.10.140.1950">
    <property type="match status" value="1"/>
</dbReference>
<dbReference type="HAMAP" id="MF_00093">
    <property type="entry name" value="Rel_fac_1"/>
    <property type="match status" value="1"/>
</dbReference>
<dbReference type="InterPro" id="IPR005139">
    <property type="entry name" value="PCRF"/>
</dbReference>
<dbReference type="InterPro" id="IPR000352">
    <property type="entry name" value="Pep_chain_release_fac_I"/>
</dbReference>
<dbReference type="InterPro" id="IPR045853">
    <property type="entry name" value="Pep_chain_release_fac_I_sf"/>
</dbReference>
<dbReference type="InterPro" id="IPR050057">
    <property type="entry name" value="Prokaryotic/Mito_RF"/>
</dbReference>
<dbReference type="InterPro" id="IPR004373">
    <property type="entry name" value="RF-1"/>
</dbReference>
<dbReference type="NCBIfam" id="TIGR00019">
    <property type="entry name" value="prfA"/>
    <property type="match status" value="1"/>
</dbReference>
<dbReference type="NCBIfam" id="NF001859">
    <property type="entry name" value="PRK00591.1"/>
    <property type="match status" value="1"/>
</dbReference>
<dbReference type="PANTHER" id="PTHR43804">
    <property type="entry name" value="LD18447P"/>
    <property type="match status" value="1"/>
</dbReference>
<dbReference type="PANTHER" id="PTHR43804:SF7">
    <property type="entry name" value="LD18447P"/>
    <property type="match status" value="1"/>
</dbReference>
<dbReference type="Pfam" id="PF03462">
    <property type="entry name" value="PCRF"/>
    <property type="match status" value="1"/>
</dbReference>
<dbReference type="Pfam" id="PF00472">
    <property type="entry name" value="RF-1"/>
    <property type="match status" value="1"/>
</dbReference>
<dbReference type="SMART" id="SM00937">
    <property type="entry name" value="PCRF"/>
    <property type="match status" value="1"/>
</dbReference>
<dbReference type="SUPFAM" id="SSF75620">
    <property type="entry name" value="Release factor"/>
    <property type="match status" value="1"/>
</dbReference>
<dbReference type="PROSITE" id="PS00745">
    <property type="entry name" value="RF_PROK_I"/>
    <property type="match status" value="1"/>
</dbReference>
<accession>Q898Y5</accession>
<proteinExistence type="inferred from homology"/>
<gene>
    <name evidence="1" type="primary">prfA</name>
    <name type="ordered locus">CTC_00302</name>
</gene>